<dbReference type="EC" id="2.1.1.77" evidence="1"/>
<dbReference type="EMBL" id="CP000769">
    <property type="protein sequence ID" value="ABS26278.1"/>
    <property type="molecule type" value="Genomic_DNA"/>
</dbReference>
<dbReference type="RefSeq" id="WP_012096857.1">
    <property type="nucleotide sequence ID" value="NC_009675.1"/>
</dbReference>
<dbReference type="SMR" id="A7HC32"/>
<dbReference type="STRING" id="404589.Anae109_2075"/>
<dbReference type="KEGG" id="afw:Anae109_2075"/>
<dbReference type="eggNOG" id="COG2518">
    <property type="taxonomic scope" value="Bacteria"/>
</dbReference>
<dbReference type="HOGENOM" id="CLU_055432_2_0_7"/>
<dbReference type="OrthoDB" id="9810066at2"/>
<dbReference type="Proteomes" id="UP000006382">
    <property type="component" value="Chromosome"/>
</dbReference>
<dbReference type="GO" id="GO:0005737">
    <property type="term" value="C:cytoplasm"/>
    <property type="evidence" value="ECO:0007669"/>
    <property type="project" value="UniProtKB-SubCell"/>
</dbReference>
<dbReference type="GO" id="GO:0004719">
    <property type="term" value="F:protein-L-isoaspartate (D-aspartate) O-methyltransferase activity"/>
    <property type="evidence" value="ECO:0007669"/>
    <property type="project" value="UniProtKB-UniRule"/>
</dbReference>
<dbReference type="GO" id="GO:0032259">
    <property type="term" value="P:methylation"/>
    <property type="evidence" value="ECO:0007669"/>
    <property type="project" value="UniProtKB-KW"/>
</dbReference>
<dbReference type="GO" id="GO:0036211">
    <property type="term" value="P:protein modification process"/>
    <property type="evidence" value="ECO:0007669"/>
    <property type="project" value="UniProtKB-UniRule"/>
</dbReference>
<dbReference type="GO" id="GO:0030091">
    <property type="term" value="P:protein repair"/>
    <property type="evidence" value="ECO:0007669"/>
    <property type="project" value="UniProtKB-UniRule"/>
</dbReference>
<dbReference type="CDD" id="cd02440">
    <property type="entry name" value="AdoMet_MTases"/>
    <property type="match status" value="1"/>
</dbReference>
<dbReference type="FunFam" id="3.40.50.150:FF:000010">
    <property type="entry name" value="Protein-L-isoaspartate O-methyltransferase"/>
    <property type="match status" value="1"/>
</dbReference>
<dbReference type="Gene3D" id="3.40.50.150">
    <property type="entry name" value="Vaccinia Virus protein VP39"/>
    <property type="match status" value="1"/>
</dbReference>
<dbReference type="HAMAP" id="MF_00090">
    <property type="entry name" value="PIMT"/>
    <property type="match status" value="1"/>
</dbReference>
<dbReference type="InterPro" id="IPR000682">
    <property type="entry name" value="PCMT"/>
</dbReference>
<dbReference type="InterPro" id="IPR029063">
    <property type="entry name" value="SAM-dependent_MTases_sf"/>
</dbReference>
<dbReference type="NCBIfam" id="TIGR00080">
    <property type="entry name" value="pimt"/>
    <property type="match status" value="1"/>
</dbReference>
<dbReference type="NCBIfam" id="NF001453">
    <property type="entry name" value="PRK00312.1"/>
    <property type="match status" value="1"/>
</dbReference>
<dbReference type="PANTHER" id="PTHR11579">
    <property type="entry name" value="PROTEIN-L-ISOASPARTATE O-METHYLTRANSFERASE"/>
    <property type="match status" value="1"/>
</dbReference>
<dbReference type="PANTHER" id="PTHR11579:SF0">
    <property type="entry name" value="PROTEIN-L-ISOASPARTATE(D-ASPARTATE) O-METHYLTRANSFERASE"/>
    <property type="match status" value="1"/>
</dbReference>
<dbReference type="Pfam" id="PF01135">
    <property type="entry name" value="PCMT"/>
    <property type="match status" value="1"/>
</dbReference>
<dbReference type="SUPFAM" id="SSF53335">
    <property type="entry name" value="S-adenosyl-L-methionine-dependent methyltransferases"/>
    <property type="match status" value="1"/>
</dbReference>
<comment type="function">
    <text evidence="1">Catalyzes the methyl esterification of L-isoaspartyl residues in peptides and proteins that result from spontaneous decomposition of normal L-aspartyl and L-asparaginyl residues. It plays a role in the repair and/or degradation of damaged proteins.</text>
</comment>
<comment type="catalytic activity">
    <reaction evidence="1">
        <text>[protein]-L-isoaspartate + S-adenosyl-L-methionine = [protein]-L-isoaspartate alpha-methyl ester + S-adenosyl-L-homocysteine</text>
        <dbReference type="Rhea" id="RHEA:12705"/>
        <dbReference type="Rhea" id="RHEA-COMP:12143"/>
        <dbReference type="Rhea" id="RHEA-COMP:12144"/>
        <dbReference type="ChEBI" id="CHEBI:57856"/>
        <dbReference type="ChEBI" id="CHEBI:59789"/>
        <dbReference type="ChEBI" id="CHEBI:90596"/>
        <dbReference type="ChEBI" id="CHEBI:90598"/>
        <dbReference type="EC" id="2.1.1.77"/>
    </reaction>
</comment>
<comment type="subcellular location">
    <subcellularLocation>
        <location evidence="1">Cytoplasm</location>
    </subcellularLocation>
</comment>
<comment type="similarity">
    <text evidence="1">Belongs to the methyltransferase superfamily. L-isoaspartyl/D-aspartyl protein methyltransferase family.</text>
</comment>
<protein>
    <recommendedName>
        <fullName evidence="1">Protein-L-isoaspartate O-methyltransferase 1</fullName>
        <ecNumber evidence="1">2.1.1.77</ecNumber>
    </recommendedName>
    <alternativeName>
        <fullName evidence="1">L-isoaspartyl protein carboxyl methyltransferase 1</fullName>
    </alternativeName>
    <alternativeName>
        <fullName evidence="1">Protein L-isoaspartyl methyltransferase 1</fullName>
    </alternativeName>
    <alternativeName>
        <fullName evidence="1">Protein-beta-aspartate methyltransferase 1</fullName>
        <shortName evidence="1">PIMT 1</shortName>
    </alternativeName>
</protein>
<reference key="1">
    <citation type="journal article" date="2015" name="Genome Announc.">
        <title>Complete genome sequence of Anaeromyxobacter sp. Fw109-5, an anaerobic, metal-reducing bacterium isolated from a contaminated subsurface environment.</title>
        <authorList>
            <person name="Hwang C."/>
            <person name="Copeland A."/>
            <person name="Lucas S."/>
            <person name="Lapidus A."/>
            <person name="Barry K."/>
            <person name="Glavina Del Rio T."/>
            <person name="Dalin E."/>
            <person name="Tice H."/>
            <person name="Pitluck S."/>
            <person name="Sims D."/>
            <person name="Brettin T."/>
            <person name="Bruce D.C."/>
            <person name="Detter J.C."/>
            <person name="Han C.S."/>
            <person name="Schmutz J."/>
            <person name="Larimer F.W."/>
            <person name="Land M.L."/>
            <person name="Hauser L.J."/>
            <person name="Kyrpides N."/>
            <person name="Lykidis A."/>
            <person name="Richardson P."/>
            <person name="Belieav A."/>
            <person name="Sanford R.A."/>
            <person name="Loeffler F.E."/>
            <person name="Fields M.W."/>
        </authorList>
    </citation>
    <scope>NUCLEOTIDE SEQUENCE [LARGE SCALE GENOMIC DNA]</scope>
    <source>
        <strain>Fw109-5</strain>
    </source>
</reference>
<organism>
    <name type="scientific">Anaeromyxobacter sp. (strain Fw109-5)</name>
    <dbReference type="NCBI Taxonomy" id="404589"/>
    <lineage>
        <taxon>Bacteria</taxon>
        <taxon>Pseudomonadati</taxon>
        <taxon>Myxococcota</taxon>
        <taxon>Myxococcia</taxon>
        <taxon>Myxococcales</taxon>
        <taxon>Cystobacterineae</taxon>
        <taxon>Anaeromyxobacteraceae</taxon>
        <taxon>Anaeromyxobacter</taxon>
    </lineage>
</organism>
<name>PIMT1_ANADF</name>
<gene>
    <name evidence="1" type="primary">pcm1</name>
    <name type="ordered locus">Anae109_2075</name>
</gene>
<accession>A7HC32</accession>
<keyword id="KW-0963">Cytoplasm</keyword>
<keyword id="KW-0489">Methyltransferase</keyword>
<keyword id="KW-1185">Reference proteome</keyword>
<keyword id="KW-0949">S-adenosyl-L-methionine</keyword>
<keyword id="KW-0808">Transferase</keyword>
<evidence type="ECO:0000255" key="1">
    <source>
        <dbReference type="HAMAP-Rule" id="MF_00090"/>
    </source>
</evidence>
<feature type="chain" id="PRO_0000351813" description="Protein-L-isoaspartate O-methyltransferase 1">
    <location>
        <begin position="1"/>
        <end position="212"/>
    </location>
</feature>
<feature type="active site" evidence="1">
    <location>
        <position position="60"/>
    </location>
</feature>
<sequence length="212" mass="22271">MVRWSVSAELSRAVAAMGIRDPAVLRAIAEVPRDLFVPPRLRHQAGADQALPIGFGQTISQPFVVAFMTERLHLTGLERVLEVGTGSGYQTAILARLAAEVFSIEIVPELAARARAALLETLHLRNVRLRTGDGAAGWPEAAPFDRVLVTAAAPEVPPALTAQLAPGGRMVVPVGAAPGLQVLRAVDKGNDGVDLSTDLIPVRFVPLTGASG</sequence>
<proteinExistence type="inferred from homology"/>